<dbReference type="EMBL" id="AP006841">
    <property type="protein sequence ID" value="BAD50344.1"/>
    <property type="molecule type" value="Genomic_DNA"/>
</dbReference>
<dbReference type="RefSeq" id="WP_011203367.1">
    <property type="nucleotide sequence ID" value="NC_006347.1"/>
</dbReference>
<dbReference type="RefSeq" id="YP_100878.1">
    <property type="nucleotide sequence ID" value="NC_006347.1"/>
</dbReference>
<dbReference type="SMR" id="Q64Q87"/>
<dbReference type="STRING" id="295405.BF3601"/>
<dbReference type="KEGG" id="bfr:BF3601"/>
<dbReference type="PATRIC" id="fig|295405.11.peg.3458"/>
<dbReference type="HOGENOM" id="CLU_050555_3_1_10"/>
<dbReference type="OrthoDB" id="9815677at2"/>
<dbReference type="Proteomes" id="UP000002197">
    <property type="component" value="Chromosome"/>
</dbReference>
<dbReference type="GO" id="GO:0005737">
    <property type="term" value="C:cytoplasm"/>
    <property type="evidence" value="ECO:0007669"/>
    <property type="project" value="UniProtKB-SubCell"/>
</dbReference>
<dbReference type="GO" id="GO:0005507">
    <property type="term" value="F:copper ion binding"/>
    <property type="evidence" value="ECO:0007669"/>
    <property type="project" value="TreeGrafter"/>
</dbReference>
<dbReference type="FunFam" id="3.20.20.380:FF:000001">
    <property type="entry name" value="Copper homeostasis protein CutC"/>
    <property type="match status" value="1"/>
</dbReference>
<dbReference type="Gene3D" id="3.20.20.380">
    <property type="entry name" value="Copper homeostasis (CutC) domain"/>
    <property type="match status" value="1"/>
</dbReference>
<dbReference type="HAMAP" id="MF_00795">
    <property type="entry name" value="CutC"/>
    <property type="match status" value="1"/>
</dbReference>
<dbReference type="InterPro" id="IPR005627">
    <property type="entry name" value="CutC-like"/>
</dbReference>
<dbReference type="InterPro" id="IPR036822">
    <property type="entry name" value="CutC-like_dom_sf"/>
</dbReference>
<dbReference type="PANTHER" id="PTHR12598">
    <property type="entry name" value="COPPER HOMEOSTASIS PROTEIN CUTC"/>
    <property type="match status" value="1"/>
</dbReference>
<dbReference type="PANTHER" id="PTHR12598:SF0">
    <property type="entry name" value="COPPER HOMEOSTASIS PROTEIN CUTC HOMOLOG"/>
    <property type="match status" value="1"/>
</dbReference>
<dbReference type="Pfam" id="PF03932">
    <property type="entry name" value="CutC"/>
    <property type="match status" value="1"/>
</dbReference>
<dbReference type="SUPFAM" id="SSF110395">
    <property type="entry name" value="CutC-like"/>
    <property type="match status" value="1"/>
</dbReference>
<accession>Q64Q87</accession>
<evidence type="ECO:0000255" key="1">
    <source>
        <dbReference type="HAMAP-Rule" id="MF_00795"/>
    </source>
</evidence>
<organism>
    <name type="scientific">Bacteroides fragilis (strain YCH46)</name>
    <dbReference type="NCBI Taxonomy" id="295405"/>
    <lineage>
        <taxon>Bacteria</taxon>
        <taxon>Pseudomonadati</taxon>
        <taxon>Bacteroidota</taxon>
        <taxon>Bacteroidia</taxon>
        <taxon>Bacteroidales</taxon>
        <taxon>Bacteroidaceae</taxon>
        <taxon>Bacteroides</taxon>
    </lineage>
</organism>
<feature type="chain" id="PRO_0000215060" description="PF03932 family protein CutC">
    <location>
        <begin position="1"/>
        <end position="251"/>
    </location>
</feature>
<name>CUTC_BACFR</name>
<gene>
    <name evidence="1" type="primary">cutC</name>
    <name type="ordered locus">BF3601</name>
</gene>
<reference key="1">
    <citation type="journal article" date="2004" name="Proc. Natl. Acad. Sci. U.S.A.">
        <title>Genomic analysis of Bacteroides fragilis reveals extensive DNA inversions regulating cell surface adaptation.</title>
        <authorList>
            <person name="Kuwahara T."/>
            <person name="Yamashita A."/>
            <person name="Hirakawa H."/>
            <person name="Nakayama H."/>
            <person name="Toh H."/>
            <person name="Okada N."/>
            <person name="Kuhara S."/>
            <person name="Hattori M."/>
            <person name="Hayashi T."/>
            <person name="Ohnishi Y."/>
        </authorList>
    </citation>
    <scope>NUCLEOTIDE SEQUENCE [LARGE SCALE GENOMIC DNA]</scope>
    <source>
        <strain>YCH46</strain>
    </source>
</reference>
<proteinExistence type="inferred from homology"/>
<sequence length="251" mass="27324">MKNYLFEVCTNSVESCIAAQEGGANRVELCAGIPEGGTTPSYGEIAMAREVLTTTRLHVIIRPRGGDFLYSPVEVKTMLKDIEMVRQLGADGVVFGCLTTNGGIDVPVMKQLMEASKGLSVTFHRAFDVCRDASEALEQIIDLGCDRILTSGQQATAELGIPLLKELRERANGRITLLAGCGVNEKNICRIAKETGIQEFHFSARESIKSGMEYKNEAVSMGGTVHISEYERNVTTVKRVKDTIESITSSL</sequence>
<keyword id="KW-0963">Cytoplasm</keyword>
<protein>
    <recommendedName>
        <fullName evidence="1">PF03932 family protein CutC</fullName>
    </recommendedName>
</protein>
<comment type="subcellular location">
    <subcellularLocation>
        <location evidence="1">Cytoplasm</location>
    </subcellularLocation>
</comment>
<comment type="similarity">
    <text evidence="1">Belongs to the CutC family.</text>
</comment>
<comment type="caution">
    <text evidence="1">Once thought to be involved in copper homeostasis, experiments in E.coli have shown this is not the case.</text>
</comment>